<keyword id="KW-0963">Cytoplasm</keyword>
<keyword id="KW-0488">Methylation</keyword>
<keyword id="KW-0648">Protein biosynthesis</keyword>
<gene>
    <name evidence="1" type="primary">prfA</name>
    <name type="ordered locus">YpsIP31758_2066</name>
</gene>
<accession>A7FIG1</accession>
<name>RF1_YERP3</name>
<sequence length="360" mass="40564">MKSSIVAKLEALQERHEEVLAYLGDASVIADQDRFRALSREYAQLTDVTRCFKEWRSAQDDIEAAEMMLDDLEMREMAQEELKIAKARSEELEQQLQVLLLPKDPDDERDCFLEIRAGTGGDEAAIFAGDMFRMYSRYAETRRWKVEIMSASEGEHGGYKEIIAKISGDGVFGQLKFESGGHRVQRVPETESQGRIHTSACTVAVMPAIPEAELPEINAGDLRIDTFRSSGAGGQHVNTTDSAIRITHIPTGIVVECQDERSQHKNKAKAMSVLGARIRAAEMQKRQLAEASERRNLLGTGDRSDRNRTYNFPQGRVTDHRINLTLYRLDEVMEGKLDMLIQPIVQEYQADQLSALSEQD</sequence>
<protein>
    <recommendedName>
        <fullName evidence="1">Peptide chain release factor 1</fullName>
        <shortName evidence="1">RF-1</shortName>
    </recommendedName>
</protein>
<comment type="function">
    <text evidence="1">Peptide chain release factor 1 directs the termination of translation in response to the peptide chain termination codons UAG and UAA.</text>
</comment>
<comment type="subcellular location">
    <subcellularLocation>
        <location evidence="1">Cytoplasm</location>
    </subcellularLocation>
</comment>
<comment type="PTM">
    <text evidence="1">Methylated by PrmC. Methylation increases the termination efficiency of RF1.</text>
</comment>
<comment type="similarity">
    <text evidence="1">Belongs to the prokaryotic/mitochondrial release factor family.</text>
</comment>
<organism>
    <name type="scientific">Yersinia pseudotuberculosis serotype O:1b (strain IP 31758)</name>
    <dbReference type="NCBI Taxonomy" id="349747"/>
    <lineage>
        <taxon>Bacteria</taxon>
        <taxon>Pseudomonadati</taxon>
        <taxon>Pseudomonadota</taxon>
        <taxon>Gammaproteobacteria</taxon>
        <taxon>Enterobacterales</taxon>
        <taxon>Yersiniaceae</taxon>
        <taxon>Yersinia</taxon>
    </lineage>
</organism>
<dbReference type="EMBL" id="CP000720">
    <property type="protein sequence ID" value="ABS46307.1"/>
    <property type="molecule type" value="Genomic_DNA"/>
</dbReference>
<dbReference type="RefSeq" id="WP_002211236.1">
    <property type="nucleotide sequence ID" value="NC_009708.1"/>
</dbReference>
<dbReference type="SMR" id="A7FIG1"/>
<dbReference type="GeneID" id="57976644"/>
<dbReference type="KEGG" id="ypi:YpsIP31758_2066"/>
<dbReference type="HOGENOM" id="CLU_036856_0_1_6"/>
<dbReference type="Proteomes" id="UP000002412">
    <property type="component" value="Chromosome"/>
</dbReference>
<dbReference type="GO" id="GO:0005737">
    <property type="term" value="C:cytoplasm"/>
    <property type="evidence" value="ECO:0007669"/>
    <property type="project" value="UniProtKB-SubCell"/>
</dbReference>
<dbReference type="GO" id="GO:0016149">
    <property type="term" value="F:translation release factor activity, codon specific"/>
    <property type="evidence" value="ECO:0007669"/>
    <property type="project" value="UniProtKB-UniRule"/>
</dbReference>
<dbReference type="FunFam" id="3.30.160.20:FF:000004">
    <property type="entry name" value="Peptide chain release factor 1"/>
    <property type="match status" value="1"/>
</dbReference>
<dbReference type="FunFam" id="3.30.70.1660:FF:000002">
    <property type="entry name" value="Peptide chain release factor 1"/>
    <property type="match status" value="1"/>
</dbReference>
<dbReference type="FunFam" id="3.30.70.1660:FF:000004">
    <property type="entry name" value="Peptide chain release factor 1"/>
    <property type="match status" value="1"/>
</dbReference>
<dbReference type="Gene3D" id="3.30.160.20">
    <property type="match status" value="1"/>
</dbReference>
<dbReference type="Gene3D" id="3.30.70.1660">
    <property type="match status" value="1"/>
</dbReference>
<dbReference type="Gene3D" id="6.10.140.1950">
    <property type="match status" value="1"/>
</dbReference>
<dbReference type="HAMAP" id="MF_00093">
    <property type="entry name" value="Rel_fac_1"/>
    <property type="match status" value="1"/>
</dbReference>
<dbReference type="InterPro" id="IPR005139">
    <property type="entry name" value="PCRF"/>
</dbReference>
<dbReference type="InterPro" id="IPR000352">
    <property type="entry name" value="Pep_chain_release_fac_I"/>
</dbReference>
<dbReference type="InterPro" id="IPR045853">
    <property type="entry name" value="Pep_chain_release_fac_I_sf"/>
</dbReference>
<dbReference type="InterPro" id="IPR050057">
    <property type="entry name" value="Prokaryotic/Mito_RF"/>
</dbReference>
<dbReference type="InterPro" id="IPR004373">
    <property type="entry name" value="RF-1"/>
</dbReference>
<dbReference type="NCBIfam" id="TIGR00019">
    <property type="entry name" value="prfA"/>
    <property type="match status" value="1"/>
</dbReference>
<dbReference type="NCBIfam" id="NF001859">
    <property type="entry name" value="PRK00591.1"/>
    <property type="match status" value="1"/>
</dbReference>
<dbReference type="PANTHER" id="PTHR43804">
    <property type="entry name" value="LD18447P"/>
    <property type="match status" value="1"/>
</dbReference>
<dbReference type="PANTHER" id="PTHR43804:SF7">
    <property type="entry name" value="LD18447P"/>
    <property type="match status" value="1"/>
</dbReference>
<dbReference type="Pfam" id="PF03462">
    <property type="entry name" value="PCRF"/>
    <property type="match status" value="1"/>
</dbReference>
<dbReference type="Pfam" id="PF00472">
    <property type="entry name" value="RF-1"/>
    <property type="match status" value="1"/>
</dbReference>
<dbReference type="SMART" id="SM00937">
    <property type="entry name" value="PCRF"/>
    <property type="match status" value="1"/>
</dbReference>
<dbReference type="SUPFAM" id="SSF75620">
    <property type="entry name" value="Release factor"/>
    <property type="match status" value="1"/>
</dbReference>
<dbReference type="PROSITE" id="PS00745">
    <property type="entry name" value="RF_PROK_I"/>
    <property type="match status" value="1"/>
</dbReference>
<proteinExistence type="inferred from homology"/>
<feature type="chain" id="PRO_1000057621" description="Peptide chain release factor 1">
    <location>
        <begin position="1"/>
        <end position="360"/>
    </location>
</feature>
<feature type="region of interest" description="Disordered" evidence="2">
    <location>
        <begin position="291"/>
        <end position="312"/>
    </location>
</feature>
<feature type="compositionally biased region" description="Basic and acidic residues" evidence="2">
    <location>
        <begin position="291"/>
        <end position="308"/>
    </location>
</feature>
<feature type="modified residue" description="N5-methylglutamine" evidence="1">
    <location>
        <position position="235"/>
    </location>
</feature>
<reference key="1">
    <citation type="journal article" date="2007" name="PLoS Genet.">
        <title>The complete genome sequence of Yersinia pseudotuberculosis IP31758, the causative agent of Far East scarlet-like fever.</title>
        <authorList>
            <person name="Eppinger M."/>
            <person name="Rosovitz M.J."/>
            <person name="Fricke W.F."/>
            <person name="Rasko D.A."/>
            <person name="Kokorina G."/>
            <person name="Fayolle C."/>
            <person name="Lindler L.E."/>
            <person name="Carniel E."/>
            <person name="Ravel J."/>
        </authorList>
    </citation>
    <scope>NUCLEOTIDE SEQUENCE [LARGE SCALE GENOMIC DNA]</scope>
    <source>
        <strain>IP 31758</strain>
    </source>
</reference>
<evidence type="ECO:0000255" key="1">
    <source>
        <dbReference type="HAMAP-Rule" id="MF_00093"/>
    </source>
</evidence>
<evidence type="ECO:0000256" key="2">
    <source>
        <dbReference type="SAM" id="MobiDB-lite"/>
    </source>
</evidence>